<name>PSBH_WELMI</name>
<evidence type="ECO:0000255" key="1">
    <source>
        <dbReference type="HAMAP-Rule" id="MF_00752"/>
    </source>
</evidence>
<protein>
    <recommendedName>
        <fullName evidence="1">Photosystem II reaction center protein H</fullName>
        <shortName evidence="1">PSII-H</shortName>
    </recommendedName>
    <alternativeName>
        <fullName evidence="1">Photosystem II 10 kDa phosphoprotein</fullName>
    </alternativeName>
</protein>
<gene>
    <name evidence="1" type="primary">psbH</name>
</gene>
<comment type="function">
    <text evidence="1">One of the components of the core complex of photosystem II (PSII), required for its stability and/or assembly. PSII is a light-driven water:plastoquinone oxidoreductase that uses light energy to abstract electrons from H(2)O, generating O(2) and a proton gradient subsequently used for ATP formation. It consists of a core antenna complex that captures photons, and an electron transfer chain that converts photonic excitation into a charge separation.</text>
</comment>
<comment type="subunit">
    <text evidence="1">PSII is composed of 1 copy each of membrane proteins PsbA, PsbB, PsbC, PsbD, PsbE, PsbF, PsbH, PsbI, PsbJ, PsbK, PsbL, PsbM, PsbT, PsbX, PsbY, PsbZ, Psb30/Ycf12, at least 3 peripheral proteins of the oxygen-evolving complex and a large number of cofactors. It forms dimeric complexes.</text>
</comment>
<comment type="subcellular location">
    <subcellularLocation>
        <location evidence="1">Plastid</location>
        <location evidence="1">Chloroplast thylakoid membrane</location>
        <topology evidence="1">Single-pass membrane protein</topology>
    </subcellularLocation>
</comment>
<comment type="PTM">
    <text evidence="1">Phosphorylation is a light-dependent reaction catalyzed by a membrane-bound kinase; phosphorylation occurs on Thr residue(s) in the N-terminus of the protein.</text>
</comment>
<comment type="similarity">
    <text evidence="1">Belongs to the PsbH family.</text>
</comment>
<proteinExistence type="inferred from homology"/>
<keyword id="KW-0150">Chloroplast</keyword>
<keyword id="KW-0472">Membrane</keyword>
<keyword id="KW-0597">Phosphoprotein</keyword>
<keyword id="KW-0602">Photosynthesis</keyword>
<keyword id="KW-0604">Photosystem II</keyword>
<keyword id="KW-0934">Plastid</keyword>
<keyword id="KW-0793">Thylakoid</keyword>
<keyword id="KW-0812">Transmembrane</keyword>
<keyword id="KW-1133">Transmembrane helix</keyword>
<dbReference type="EMBL" id="EU342371">
    <property type="protein sequence ID" value="ABY26818.1"/>
    <property type="molecule type" value="Genomic_DNA"/>
</dbReference>
<dbReference type="EMBL" id="AP009568">
    <property type="protein sequence ID" value="BAH11200.1"/>
    <property type="molecule type" value="Genomic_DNA"/>
</dbReference>
<dbReference type="RefSeq" id="YP_001876605.1">
    <property type="nucleotide sequence ID" value="NC_010654.1"/>
</dbReference>
<dbReference type="SMR" id="B2Y1Y8"/>
<dbReference type="GeneID" id="6276254"/>
<dbReference type="GO" id="GO:0009535">
    <property type="term" value="C:chloroplast thylakoid membrane"/>
    <property type="evidence" value="ECO:0007669"/>
    <property type="project" value="UniProtKB-SubCell"/>
</dbReference>
<dbReference type="GO" id="GO:0009523">
    <property type="term" value="C:photosystem II"/>
    <property type="evidence" value="ECO:0007669"/>
    <property type="project" value="UniProtKB-KW"/>
</dbReference>
<dbReference type="GO" id="GO:0042301">
    <property type="term" value="F:phosphate ion binding"/>
    <property type="evidence" value="ECO:0007669"/>
    <property type="project" value="InterPro"/>
</dbReference>
<dbReference type="GO" id="GO:0015979">
    <property type="term" value="P:photosynthesis"/>
    <property type="evidence" value="ECO:0007669"/>
    <property type="project" value="UniProtKB-UniRule"/>
</dbReference>
<dbReference type="GO" id="GO:0050821">
    <property type="term" value="P:protein stabilization"/>
    <property type="evidence" value="ECO:0007669"/>
    <property type="project" value="InterPro"/>
</dbReference>
<dbReference type="Gene3D" id="1.20.5.880">
    <property type="entry name" value="Photosystem II reaction center protein H"/>
    <property type="match status" value="1"/>
</dbReference>
<dbReference type="HAMAP" id="MF_00752">
    <property type="entry name" value="PSII_PsbH"/>
    <property type="match status" value="1"/>
</dbReference>
<dbReference type="InterPro" id="IPR001056">
    <property type="entry name" value="PSII_PsbH"/>
</dbReference>
<dbReference type="InterPro" id="IPR036863">
    <property type="entry name" value="PSII_PsbH_sf"/>
</dbReference>
<dbReference type="NCBIfam" id="NF002728">
    <property type="entry name" value="PRK02624.1"/>
    <property type="match status" value="1"/>
</dbReference>
<dbReference type="PANTHER" id="PTHR34469">
    <property type="entry name" value="PHOTOSYSTEM II REACTION CENTER PROTEIN H"/>
    <property type="match status" value="1"/>
</dbReference>
<dbReference type="PANTHER" id="PTHR34469:SF4">
    <property type="entry name" value="PHOTOSYSTEM II REACTION CENTER PROTEIN H"/>
    <property type="match status" value="1"/>
</dbReference>
<dbReference type="Pfam" id="PF00737">
    <property type="entry name" value="PsbH"/>
    <property type="match status" value="1"/>
</dbReference>
<dbReference type="SUPFAM" id="SSF161025">
    <property type="entry name" value="Photosystem II 10 kDa phosphoprotein PsbH"/>
    <property type="match status" value="1"/>
</dbReference>
<reference key="1">
    <citation type="journal article" date="2008" name="BMC Evol. Biol.">
        <title>The complete plastid genome sequence of Welwitschia mirabilis: an unusually compact plastome with accelerated divergence rates.</title>
        <authorList>
            <person name="McCoy S.R."/>
            <person name="Kuehl J.V."/>
            <person name="Boore J.L."/>
            <person name="Raubeson L.A."/>
        </authorList>
    </citation>
    <scope>NUCLEOTIDE SEQUENCE [LARGE SCALE GENOMIC DNA]</scope>
</reference>
<reference key="2">
    <citation type="journal article" date="2009" name="Mol. Phylogenet. Evol.">
        <title>Evolution of reduced and compact chloroplast genomes (cpDNAs) in gnetophytes: Selection toward a lower-cost strategy.</title>
        <authorList>
            <person name="Wu C.-S."/>
            <person name="Lai Y.-T."/>
            <person name="Lin C.-P."/>
            <person name="Wang Y.-N."/>
            <person name="Chaw S.-M."/>
        </authorList>
    </citation>
    <scope>NUCLEOTIDE SEQUENCE [LARGE SCALE GENOMIC DNA]</scope>
</reference>
<feature type="chain" id="PRO_1000148354" description="Photosystem II reaction center protein H">
    <location>
        <begin position="1"/>
        <end position="74"/>
    </location>
</feature>
<feature type="transmembrane region" description="Helical" evidence="1">
    <location>
        <begin position="41"/>
        <end position="61"/>
    </location>
</feature>
<feature type="modified residue" description="Phosphothreonine" evidence="1">
    <location>
        <position position="3"/>
    </location>
</feature>
<feature type="modified residue" description="Phosphothreonine" evidence="1">
    <location>
        <position position="5"/>
    </location>
</feature>
<geneLocation type="chloroplast"/>
<accession>B2Y1Y8</accession>
<organism>
    <name type="scientific">Welwitschia mirabilis</name>
    <name type="common">Tree tumbo</name>
    <name type="synonym">Welwitschia bainesii</name>
    <dbReference type="NCBI Taxonomy" id="3377"/>
    <lineage>
        <taxon>Eukaryota</taxon>
        <taxon>Viridiplantae</taxon>
        <taxon>Streptophyta</taxon>
        <taxon>Embryophyta</taxon>
        <taxon>Tracheophyta</taxon>
        <taxon>Spermatophyta</taxon>
        <taxon>Gnetopsida</taxon>
        <taxon>Gnetidae</taxon>
        <taxon>Welwitschiales</taxon>
        <taxon>Welwitschiaceae</taxon>
        <taxon>Welwitschia</taxon>
    </lineage>
</organism>
<sequence length="74" mass="8215">MATQTVNETSRTRPRRTGIGSYLKPLNSEYGKVAPGWGTTPLMGFFMVLFAIFLSLLLEIYNSSILLNGISVSW</sequence>